<sequence length="520" mass="56477">MSTNPKPQRKTKRNTNRRPQDVKFPGGGQIVGGVYLLTRRGPRLGVRATRKTSERSQPRGRRQPIPKARRPEGRAWAQPGYPWPLYGNEGLGWAGWLLSPRGSRPSWGPTDPRRRSRNLGKVIDTLTCGFADLMGYIPLVGAPLGGASRALAHGVRVLEDGVNYATGNLPGCSFSIFLSALMSCLTTPASAYEVRNVSGIYHVTNDCSNSSIAYEAAGMIMHTPGCVPCVRENNSSRCWVALTPTLAARNASVPTTTIRRHVDLLVGAATLCSAMYVGDLCGSVFLVSQLFTFSPRRYETVQDCNCSIYPGHVSGHRMAWDMMMNWSPTAALVVSQLLRIPQAVVDMVAGAHWGVLAGLAYYSMVGNWAKVLIVMLLFAGVDGANTHTVGGTEGFATQRLTSLFALGPSQKIQLINTNGSWHINRTALNCNDSFKTGFLAALFYVHKFNASGCPEHMASCRPIDKFDQGWGPVTYAEPSISEQRPYCWHYAPRPCGTIPASEVCGPVYCFTPSPVVVGTT</sequence>
<evidence type="ECO:0000250" key="1">
    <source>
        <dbReference type="UniProtKB" id="P26662"/>
    </source>
</evidence>
<evidence type="ECO:0000250" key="2">
    <source>
        <dbReference type="UniProtKB" id="P26663"/>
    </source>
</evidence>
<evidence type="ECO:0000250" key="3">
    <source>
        <dbReference type="UniProtKB" id="P26664"/>
    </source>
</evidence>
<evidence type="ECO:0000250" key="4">
    <source>
        <dbReference type="UniProtKB" id="P27958"/>
    </source>
</evidence>
<evidence type="ECO:0000250" key="5">
    <source>
        <dbReference type="UniProtKB" id="P29846"/>
    </source>
</evidence>
<evidence type="ECO:0000250" key="6">
    <source>
        <dbReference type="UniProtKB" id="Q03463"/>
    </source>
</evidence>
<evidence type="ECO:0000250" key="7">
    <source>
        <dbReference type="UniProtKB" id="Q5EG65"/>
    </source>
</evidence>
<evidence type="ECO:0000250" key="8">
    <source>
        <dbReference type="UniProtKB" id="Q913V3"/>
    </source>
</evidence>
<evidence type="ECO:0000250" key="9">
    <source>
        <dbReference type="UniProtKB" id="Q99IB8"/>
    </source>
</evidence>
<evidence type="ECO:0000250" key="10">
    <source>
        <dbReference type="UniProtKB" id="Q9WMX2"/>
    </source>
</evidence>
<evidence type="ECO:0000255" key="11"/>
<evidence type="ECO:0000256" key="12">
    <source>
        <dbReference type="SAM" id="MobiDB-lite"/>
    </source>
</evidence>
<evidence type="ECO:0000269" key="13">
    <source>
    </source>
</evidence>
<evidence type="ECO:0000305" key="14"/>
<protein>
    <recommendedName>
        <fullName>Genome polyprotein</fullName>
    </recommendedName>
    <component>
        <recommendedName>
            <fullName>Core protein precursor</fullName>
        </recommendedName>
        <alternativeName>
            <fullName>Capsid protein C</fullName>
        </alternativeName>
        <alternativeName>
            <fullName>p23</fullName>
        </alternativeName>
    </component>
    <component>
        <recommendedName>
            <fullName>Mature core protein</fullName>
        </recommendedName>
        <alternativeName>
            <fullName>p21</fullName>
        </alternativeName>
    </component>
    <component>
        <recommendedName>
            <fullName>Envelope glycoprotein E1</fullName>
        </recommendedName>
        <alternativeName>
            <fullName>gp32</fullName>
        </alternativeName>
        <alternativeName>
            <fullName>gp35</fullName>
        </alternativeName>
    </component>
    <component>
        <recommendedName>
            <fullName>Envelope glycoprotein E2</fullName>
        </recommendedName>
        <alternativeName>
            <fullName>NS1</fullName>
        </alternativeName>
        <alternativeName>
            <fullName>gp68</fullName>
        </alternativeName>
        <alternativeName>
            <fullName>gp70</fullName>
        </alternativeName>
    </component>
</protein>
<keyword id="KW-0007">Acetylation</keyword>
<keyword id="KW-0053">Apoptosis</keyword>
<keyword id="KW-0167">Capsid protein</keyword>
<keyword id="KW-1165">Clathrin-mediated endocytosis of virus by host</keyword>
<keyword id="KW-1015">Disulfide bond</keyword>
<keyword id="KW-1170">Fusion of virus membrane with host endosomal membrane</keyword>
<keyword id="KW-1168">Fusion of virus membrane with host membrane</keyword>
<keyword id="KW-0325">Glycoprotein</keyword>
<keyword id="KW-1035">Host cytoplasm</keyword>
<keyword id="KW-1038">Host endoplasmic reticulum</keyword>
<keyword id="KW-1041">Host lipid droplet</keyword>
<keyword id="KW-1043">Host membrane</keyword>
<keyword id="KW-1045">Host mitochondrion</keyword>
<keyword id="KW-1048">Host nucleus</keyword>
<keyword id="KW-0945">Host-virus interaction</keyword>
<keyword id="KW-1090">Inhibition of host innate immune response by virus</keyword>
<keyword id="KW-0922">Interferon antiviral system evasion</keyword>
<keyword id="KW-1017">Isopeptide bond</keyword>
<keyword id="KW-0460">Magnesium</keyword>
<keyword id="KW-0472">Membrane</keyword>
<keyword id="KW-0553">Oncogene</keyword>
<keyword id="KW-0597">Phosphoprotein</keyword>
<keyword id="KW-0687">Ribonucleoprotein</keyword>
<keyword id="KW-0694">RNA-binding</keyword>
<keyword id="KW-0812">Transmembrane</keyword>
<keyword id="KW-1133">Transmembrane helix</keyword>
<keyword id="KW-0832">Ubl conjugation</keyword>
<keyword id="KW-1161">Viral attachment to host cell</keyword>
<keyword id="KW-0261">Viral envelope protein</keyword>
<keyword id="KW-0899">Viral immunoevasion</keyword>
<keyword id="KW-0543">Viral nucleoprotein</keyword>
<keyword id="KW-1162">Viral penetration into host cytoplasm</keyword>
<keyword id="KW-0946">Virion</keyword>
<keyword id="KW-1164">Virus endocytosis by host</keyword>
<keyword id="KW-1160">Virus entry into host cell</keyword>
<accession>Q01403</accession>
<organism>
    <name type="scientific">Hepatitis C virus (isolate HCV-KF)</name>
    <name type="common">HCV</name>
    <dbReference type="NCBI Taxonomy" id="31644"/>
    <lineage>
        <taxon>Viruses</taxon>
        <taxon>Riboviria</taxon>
        <taxon>Orthornavirae</taxon>
        <taxon>Kitrinoviricota</taxon>
        <taxon>Flasuviricetes</taxon>
        <taxon>Amarillovirales</taxon>
        <taxon>Flaviviridae</taxon>
        <taxon>Hepacivirus</taxon>
        <taxon>Hepacivirus hominis</taxon>
    </lineage>
</organism>
<proteinExistence type="evidence at protein level"/>
<feature type="initiator methionine" description="Removed; by host" evidence="3">
    <location>
        <position position="1"/>
    </location>
</feature>
<feature type="chain" id="PRO_0000450908" description="Genome polyprotein">
    <location>
        <begin position="2"/>
        <end position="520" status="greater than"/>
    </location>
</feature>
<feature type="chain" id="PRO_0000037593" description="Core protein precursor">
    <location>
        <begin position="2"/>
        <end position="191"/>
    </location>
</feature>
<feature type="chain" id="PRO_0000037594" description="Mature core protein">
    <location>
        <begin position="2"/>
        <end position="177"/>
    </location>
</feature>
<feature type="propeptide" id="PRO_0000037595" description="ER anchor for the core protein, removed in mature form by host signal peptidase">
    <location>
        <begin position="178"/>
        <end position="191"/>
    </location>
</feature>
<feature type="chain" id="PRO_0000037596" description="Envelope glycoprotein E1">
    <location>
        <begin position="192"/>
        <end position="383"/>
    </location>
</feature>
<feature type="chain" id="PRO_0000037597" description="Envelope glycoprotein E2">
    <location>
        <begin position="384"/>
        <end position="520" status="greater than"/>
    </location>
</feature>
<feature type="topological domain" description="Cytoplasmic" evidence="11">
    <location>
        <begin position="2"/>
        <end position="168"/>
    </location>
</feature>
<feature type="transmembrane region" description="Helical" evidence="11">
    <location>
        <begin position="169"/>
        <end position="189"/>
    </location>
</feature>
<feature type="topological domain" description="Lumenal" evidence="4">
    <location>
        <begin position="190"/>
        <end position="358"/>
    </location>
</feature>
<feature type="transmembrane region" description="Helical" evidence="4">
    <location>
        <begin position="359"/>
        <end position="379"/>
    </location>
</feature>
<feature type="topological domain" description="Lumenal" evidence="4">
    <location>
        <begin position="380"/>
        <end position="520" status="greater than"/>
    </location>
</feature>
<feature type="region of interest" description="Disordered" evidence="4">
    <location>
        <begin position="2"/>
        <end position="75"/>
    </location>
</feature>
<feature type="region of interest" description="Interaction with DDX3X" evidence="7">
    <location>
        <begin position="2"/>
        <end position="59"/>
    </location>
</feature>
<feature type="region of interest" description="Interaction with EIF2AK2/PKR" evidence="1">
    <location>
        <begin position="2"/>
        <end position="58"/>
    </location>
</feature>
<feature type="region of interest" description="Interaction with STAT1" evidence="1">
    <location>
        <begin position="2"/>
        <end position="23"/>
    </location>
</feature>
<feature type="region of interest" description="Important for endoplasmic reticulum and mitochondrial localization" evidence="1">
    <location>
        <begin position="112"/>
        <end position="152"/>
    </location>
</feature>
<feature type="region of interest" description="Interaction with APOA2" evidence="5">
    <location>
        <begin position="122"/>
        <end position="173"/>
    </location>
</feature>
<feature type="region of interest" description="Important for lipid droplets localization" evidence="4">
    <location>
        <begin position="164"/>
        <end position="167"/>
    </location>
</feature>
<feature type="region of interest" description="Important for fusion" evidence="4">
    <location>
        <begin position="265"/>
        <end position="296"/>
    </location>
</feature>
<feature type="region of interest" description="HVR1" evidence="4">
    <location>
        <begin position="385"/>
        <end position="411"/>
    </location>
</feature>
<feature type="region of interest" description="HVR2" evidence="4">
    <location>
        <begin position="474"/>
        <end position="479"/>
    </location>
</feature>
<feature type="region of interest" description="CD81-binding 1" evidence="2">
    <location>
        <begin position="480"/>
        <end position="493"/>
    </location>
</feature>
<feature type="short sequence motif" description="Nuclear localization signal" evidence="9">
    <location>
        <begin position="5"/>
        <end position="13"/>
    </location>
</feature>
<feature type="short sequence motif" description="Nuclear localization signal" evidence="9">
    <location>
        <begin position="38"/>
        <end position="43"/>
    </location>
</feature>
<feature type="short sequence motif" description="Nuclear localization signal" evidence="9">
    <location>
        <begin position="58"/>
        <end position="64"/>
    </location>
</feature>
<feature type="short sequence motif" description="Nuclear localization signal" evidence="9">
    <location>
        <begin position="66"/>
        <end position="71"/>
    </location>
</feature>
<feature type="compositionally biased region" description="Basic residues" evidence="12">
    <location>
        <begin position="7"/>
        <end position="16"/>
    </location>
</feature>
<feature type="compositionally biased region" description="Basic residues" evidence="12">
    <location>
        <begin position="58"/>
        <end position="68"/>
    </location>
</feature>
<feature type="site" description="Cleavage; by host signal peptide peptidase" evidence="1">
    <location>
        <begin position="177"/>
        <end position="178"/>
    </location>
</feature>
<feature type="site" description="Cleavage; by host signal peptidase" evidence="1">
    <location>
        <begin position="191"/>
        <end position="192"/>
    </location>
</feature>
<feature type="site" description="Cleavage; by host signal peptidase" evidence="1">
    <location>
        <begin position="383"/>
        <end position="384"/>
    </location>
</feature>
<feature type="modified residue" description="N-acetylserine; by host" evidence="8">
    <location>
        <position position="2"/>
    </location>
</feature>
<feature type="modified residue" description="Phosphoserine; by host" evidence="13">
    <location>
        <position position="53"/>
    </location>
</feature>
<feature type="modified residue" description="Phosphoserine; by host" evidence="13">
    <location>
        <position position="99"/>
    </location>
</feature>
<feature type="modified residue" description="Phosphoserine; by host PKA" evidence="13">
    <location>
        <position position="116"/>
    </location>
</feature>
<feature type="glycosylation site" description="N-linked (GlcNAc...) asparagine; by host" evidence="4">
    <location>
        <position position="196"/>
    </location>
</feature>
<feature type="glycosylation site" description="N-linked (GlcNAc...) asparagine; by host" evidence="4">
    <location>
        <position position="209"/>
    </location>
</feature>
<feature type="glycosylation site" description="N-linked (GlcNAc...) asparagine; by host" evidence="4">
    <location>
        <position position="234"/>
    </location>
</feature>
<feature type="glycosylation site" description="N-linked (GlcNAc...) asparagine; by host" evidence="4">
    <location>
        <position position="250"/>
    </location>
</feature>
<feature type="glycosylation site" description="N-linked (GlcNAc...) asparagine; by host" evidence="11">
    <location>
        <position position="305"/>
    </location>
</feature>
<feature type="glycosylation site" description="N-linked (GlcNAc...) asparagine; by host" evidence="11">
    <location>
        <position position="418"/>
    </location>
</feature>
<feature type="glycosylation site" description="N-linked (GlcNAc...) (high mannose) asparagine; by host" evidence="4">
    <location>
        <position position="424"/>
    </location>
</feature>
<feature type="glycosylation site" description="N-linked (GlcNAc...) (high mannose) asparagine; by host" evidence="4">
    <location>
        <position position="431"/>
    </location>
</feature>
<feature type="glycosylation site" description="N-linked (GlcNAc...) (high mannose) asparagine; by host" evidence="4">
    <location>
        <position position="449"/>
    </location>
</feature>
<feature type="disulfide bond" evidence="4">
    <location>
        <begin position="453"/>
        <end position="460"/>
    </location>
</feature>
<feature type="disulfide bond" evidence="4">
    <location>
        <begin position="487"/>
        <end position="495"/>
    </location>
</feature>
<feature type="disulfide bond" evidence="4">
    <location>
        <begin position="504"/>
        <end position="509"/>
    </location>
</feature>
<feature type="mutagenesis site" description="13% loss of phosphorylation by PKA and 19% loss of phosphorylation by PKC in vitro." evidence="13">
    <original>S</original>
    <variation>A</variation>
    <location>
        <position position="53"/>
    </location>
</feature>
<feature type="mutagenesis site" description="No effect on HBV suppression." evidence="13">
    <original>S</original>
    <variation>D</variation>
    <location>
        <position position="53"/>
    </location>
</feature>
<feature type="mutagenesis site" description="40% loss of phosphorylation by PKC in vitro. Complete loss of HBV suppression." evidence="13">
    <original>S</original>
    <variation>A</variation>
    <location>
        <position position="99"/>
    </location>
</feature>
<feature type="mutagenesis site" description="Complete loss of HBV suppression." evidence="13">
    <original>S</original>
    <variation>D</variation>
    <location>
        <position position="99"/>
    </location>
</feature>
<feature type="mutagenesis site" description="61% loss of phosphorylation by PKA in vitro. Complete loss of HBV suppression." evidence="13">
    <original>S</original>
    <variation>A</variation>
    <location>
        <position position="116"/>
    </location>
</feature>
<feature type="mutagenesis site" description="Complete loss of HBV suppression." evidence="13">
    <original>S</original>
    <variation>D</variation>
    <location>
        <position position="116"/>
    </location>
</feature>
<feature type="non-terminal residue">
    <location>
        <position position="520"/>
    </location>
</feature>
<dbReference type="EMBL" id="D10687">
    <property type="protein sequence ID" value="BAA01529.1"/>
    <property type="molecule type" value="Genomic_RNA"/>
</dbReference>
<dbReference type="PIR" id="JQ1925">
    <property type="entry name" value="JQ1925"/>
</dbReference>
<dbReference type="SMR" id="Q01403"/>
<dbReference type="iPTMnet" id="Q01403"/>
<dbReference type="euHCVdb" id="D10687"/>
<dbReference type="GO" id="GO:0044167">
    <property type="term" value="C:host cell endoplasmic reticulum membrane"/>
    <property type="evidence" value="ECO:0007669"/>
    <property type="project" value="UniProtKB-SubCell"/>
</dbReference>
<dbReference type="GO" id="GO:0044186">
    <property type="term" value="C:host cell lipid droplet"/>
    <property type="evidence" value="ECO:0007669"/>
    <property type="project" value="UniProtKB-SubCell"/>
</dbReference>
<dbReference type="GO" id="GO:0044191">
    <property type="term" value="C:host cell mitochondrial membrane"/>
    <property type="evidence" value="ECO:0007669"/>
    <property type="project" value="UniProtKB-SubCell"/>
</dbReference>
<dbReference type="GO" id="GO:0042025">
    <property type="term" value="C:host cell nucleus"/>
    <property type="evidence" value="ECO:0007669"/>
    <property type="project" value="UniProtKB-SubCell"/>
</dbReference>
<dbReference type="GO" id="GO:0016020">
    <property type="term" value="C:membrane"/>
    <property type="evidence" value="ECO:0007669"/>
    <property type="project" value="UniProtKB-KW"/>
</dbReference>
<dbReference type="GO" id="GO:1990904">
    <property type="term" value="C:ribonucleoprotein complex"/>
    <property type="evidence" value="ECO:0007669"/>
    <property type="project" value="UniProtKB-KW"/>
</dbReference>
<dbReference type="GO" id="GO:0019031">
    <property type="term" value="C:viral envelope"/>
    <property type="evidence" value="ECO:0007669"/>
    <property type="project" value="UniProtKB-KW"/>
</dbReference>
<dbReference type="GO" id="GO:0019013">
    <property type="term" value="C:viral nucleocapsid"/>
    <property type="evidence" value="ECO:0007669"/>
    <property type="project" value="UniProtKB-KW"/>
</dbReference>
<dbReference type="GO" id="GO:0055036">
    <property type="term" value="C:virion membrane"/>
    <property type="evidence" value="ECO:0007669"/>
    <property type="project" value="UniProtKB-SubCell"/>
</dbReference>
<dbReference type="GO" id="GO:0003723">
    <property type="term" value="F:RNA binding"/>
    <property type="evidence" value="ECO:0007669"/>
    <property type="project" value="UniProtKB-KW"/>
</dbReference>
<dbReference type="GO" id="GO:0005198">
    <property type="term" value="F:structural molecule activity"/>
    <property type="evidence" value="ECO:0007669"/>
    <property type="project" value="InterPro"/>
</dbReference>
<dbReference type="GO" id="GO:0075512">
    <property type="term" value="P:clathrin-dependent endocytosis of virus by host cell"/>
    <property type="evidence" value="ECO:0007669"/>
    <property type="project" value="UniProtKB-KW"/>
</dbReference>
<dbReference type="GO" id="GO:0039654">
    <property type="term" value="P:fusion of virus membrane with host endosome membrane"/>
    <property type="evidence" value="ECO:0007669"/>
    <property type="project" value="UniProtKB-KW"/>
</dbReference>
<dbReference type="GO" id="GO:0052170">
    <property type="term" value="P:symbiont-mediated suppression of host innate immune response"/>
    <property type="evidence" value="ECO:0007669"/>
    <property type="project" value="UniProtKB-KW"/>
</dbReference>
<dbReference type="GO" id="GO:0019062">
    <property type="term" value="P:virion attachment to host cell"/>
    <property type="evidence" value="ECO:0007669"/>
    <property type="project" value="UniProtKB-KW"/>
</dbReference>
<dbReference type="FunFam" id="3.30.160.890:FF:000001">
    <property type="entry name" value="Genome polyprotein"/>
    <property type="match status" value="1"/>
</dbReference>
<dbReference type="FunFam" id="4.10.710.10:FF:000001">
    <property type="entry name" value="Genome polyprotein"/>
    <property type="match status" value="1"/>
</dbReference>
<dbReference type="Gene3D" id="4.10.710.10">
    <property type="entry name" value="Hepatitis C Virus Capsid Protein, Chain A"/>
    <property type="match status" value="1"/>
</dbReference>
<dbReference type="Gene3D" id="3.30.160.890">
    <property type="entry name" value="Hepatitis C virus envelope glycoprotein E1, chain C"/>
    <property type="match status" value="1"/>
</dbReference>
<dbReference type="InterPro" id="IPR002521">
    <property type="entry name" value="HCV_Core_C"/>
</dbReference>
<dbReference type="InterPro" id="IPR044896">
    <property type="entry name" value="HCV_core_chain_A"/>
</dbReference>
<dbReference type="InterPro" id="IPR002522">
    <property type="entry name" value="HCV_core_N"/>
</dbReference>
<dbReference type="InterPro" id="IPR002519">
    <property type="entry name" value="HCV_Env"/>
</dbReference>
<dbReference type="InterPro" id="IPR002531">
    <property type="entry name" value="HCV_NS1"/>
</dbReference>
<dbReference type="Pfam" id="PF01543">
    <property type="entry name" value="HCV_capsid"/>
    <property type="match status" value="1"/>
</dbReference>
<dbReference type="Pfam" id="PF01542">
    <property type="entry name" value="HCV_core"/>
    <property type="match status" value="1"/>
</dbReference>
<dbReference type="Pfam" id="PF01539">
    <property type="entry name" value="HCV_env"/>
    <property type="match status" value="1"/>
</dbReference>
<dbReference type="Pfam" id="PF01560">
    <property type="entry name" value="HCV_NS1"/>
    <property type="match status" value="1"/>
</dbReference>
<organismHost>
    <name type="scientific">Homo sapiens</name>
    <name type="common">Human</name>
    <dbReference type="NCBI Taxonomy" id="9606"/>
</organismHost>
<name>POLG_HCVHK</name>
<comment type="function">
    <molecule>Mature core protein</molecule>
    <text evidence="1 3 4 5 9 14">Packages viral RNA to form a viral nucleocapsid, and promotes virion budding (Probable). Participates in the viral particle production as a result of its interaction with the non-structural protein 5A (By similarity). Binds RNA and may function as a RNA chaperone to induce the RNA structural rearrangements taking place during virus replication (By similarity). Modulates viral translation initiation by interacting with viral IRES and 40S ribosomal subunit (By similarity). Affects various cell signaling pathways, host immunity and lipid metabolism (Probable). Prevents the establishment of cellular antiviral state by blocking the interferon-alpha/beta (IFN-alpha/beta) and IFN-gamma signaling pathways and by blocking the formation of phosphorylated STAT1 and promoting ubiquitin-mediated proteasome-dependent degradation of STAT1 (By similarity). Activates STAT3 leading to cellular transformation (By similarity). Regulates the activity of cellular genes, including c-myc and c-fos (By similarity). May repress the promoter of p53, and sequester CREB3 and SP110 isoform 3/Sp110b in the cytoplasm (By similarity). Represses cell cycle negative regulating factor CDKN1A, thereby interrupting an important check point of normal cell cycle regulation (By similarity). Targets transcription factors involved in the regulation of inflammatory responses and in the immune response: suppresses TNF-induced NF-kappa-B activation, and activates AP-1 (By similarity). Binds to dendritic cells (DCs) via C1QR1, resulting in down-regulation of T-lymphocytes proliferation (By similarity). Alters lipid metabolism by interacting with hepatocellular proteins involved in lipid accumulation and storage (By similarity). Induces up-regulation of FAS promoter activity, and thereby contributes to the increased triglyceride accumulation in hepatocytes (steatosis) (By similarity).</text>
</comment>
<comment type="function">
    <molecule>Envelope glycoprotein E1</molecule>
    <text evidence="4">Forms a heterodimer with envelope glycoprotein E2, which mediates virus attachment to the host cell, virion internalization through clathrin-dependent endocytosis and fusion with host membrane (By similarity). Fusion with the host cell is most likely mediated by both E1 and E2, through conformational rearrangements of the heterodimer required for fusion rather than a classical class II fusion mechanism (By similarity). E1/E2 heterodimer binds host apolipoproteins such as APOB and ApoE thereby forming a lipo-viro-particle (LVP) (By similarity). APOE associated to the LVP allows the initial virus attachment to cell surface receptors such as the heparan sulfate proteoglycans (HSPGs), syndecan-1 (SDC1), syndecan-1 (SDC2), the low-density lipoprotein receptor (LDLR) and scavenger receptor class B type I (SCARB1) (By similarity). The cholesterol transfer activity of SCARB1 allows E2 exposure and binding of E2 to SCARB1 and the tetraspanin CD81 (By similarity). E1/E2 heterodimer binding on CD81 activates the epithelial growth factor receptor (EGFR) signaling pathway (By similarity). Diffusion of the complex E1-E2-EGFR-SCARB1-CD81 to the cell lateral membrane allows further interaction with Claudin 1 (CLDN1) and occludin (OCLN) to finally trigger HCV entry (By similarity).</text>
</comment>
<comment type="function">
    <molecule>Envelope glycoprotein E2</molecule>
    <text evidence="3 4">Forms a heterodimer with envelope glycoprotein E1, which mediates virus attachment to the host cell, virion internalization through clathrin-dependent endocytosis and fusion with host membrane (By similarity). Fusion with the host cell is most likely mediated by both E1 and E2, through conformational rearrangements of the heterodimer required for fusion rather than a classical class II fusion mechanism (By similarity). The interaction between envelope glycoprotein E2 and host apolipoprotein E/APOE allows the proper assembly, maturation and infectivity of the viral particles (By similarity). This interaction is probably promoted via the up-regulation of cellular autophagy by the virus (By similarity). E1/E2 heterodimer binds host apolipoproteins such as APOB and APOE thereby forming a lipo-viro-particle (LVP) (By similarity). APOE associated to the LVP allows the initial virus attachment to cell surface receptors such as the heparan sulfate proteoglycans (HSPGs), syndecan-1 (SDC1), syndecan-1 (SDC2), the low-density lipoprotein receptor (LDLR) and scavenger receptor class B type I (SCARB1) (By similarity). The cholesterol transfer activity of SCARB1 allows E2 exposure and binding of E2 to SCARB1 and the tetraspanin CD81 (By similarity). E1/E2 heterodimer binding on CD81 activates the epithelial growth factor receptor (EGFR) signaling pathway (By similarity). Diffusion of the complex E1-E2-EGFR-SCARB1-CD81 to the cell lateral membrane allows further interaction with Claudin 1 (CLDN1) and occludin (OCLN) to finally trigger HCV entry (By similarity). Inhibits host EIF2AK2/PKR activation, preventing the establishment of an antiviral state (By similarity). Viral ligand for CD209/DC-SIGN and CLEC4M/DC-SIGNR, which are respectively found on dendritic cells (DCs), and on liver sinusoidal endothelial cells and macrophage-like cells of lymph node sinuses (By similarity). These interactions allow the capture of circulating HCV particles by these cells and subsequent facilitated transmission to permissive cells such as hepatocytes and lymphocyte subpopulations (By similarity).</text>
</comment>
<comment type="subunit">
    <molecule>Mature core protein</molecule>
    <text evidence="1 3 4 5 6 7 9">Homooligomer (By similarity). Interacts with E1 (via C-terminus) (By similarity). Interacts with the non-structural protein 5A (By similarity). Interacts (via N-terminus) with host STAT1 (via SH2 domain); this interaction results in decreased STAT1 phosphorylation and ubiquitin-mediated proteasome-dependent STAT1 degradation, leading to decreased IFN-stimulated gene transcription (By similarity). Interacts with host STAT3; this interaction constitutively activates STAT3 (By similarity). Interacts with host LTBR receptor (By similarity). Interacts with host TNFRSF1A receptor and possibly induces apoptosis (By similarity). Interacts with host HNRPK (By similarity). Interacts with host YWHAE (By similarity). Interacts with host UBE3A/E6AP (By similarity). Interacts with host DDX3X (By similarity). Interacts with host APOA2 (By similarity). Interacts with host RXRA protein (By similarity). Interacts with host SP110 isoform 3/Sp110b; this interaction sequesters the transcriptional corepressor SP110 away from the nucleus (By similarity). Interacts with host CREB3 nuclear transcription protein; this interaction triggers cell transformation (By similarity). Interacts with host ACY3 (By similarity). Interacts with host C1QR1 (By similarity). Interacts with host RBM24; this interaction, which enhances the interaction of the mature core protein with 5'-UTR, may inhibit viral translation and favor replication (By similarity). Interacts with host EIF2AK2/PKR; this interaction induces the autophosphorylation of EIF2AK2 (By similarity). Part of the viral assembly initiation complex composed of NS2, E1, E2, NS3, NS4A, NS5A and the mature core protein (By similarity).</text>
</comment>
<comment type="subunit">
    <molecule>Envelope glycoprotein E1</molecule>
    <text evidence="4 9">Forms a heterodimer with envelope glycoprotein E2 (By similarity). Interacts with mature core protein (By similarity). Interacts with protease NS2 (By similarity). The heterodimer E1/E2 interacts with host CLDN1; this interaction plays a role in viral entry into host cell (By similarity). Interacts with host SPSB2 (via C-terminus) (By similarity). Part of the viral assembly initiation complex composed of NS2, E1, E2, NS3, NS4A, NS5A and the mature core protein (By similarity).</text>
</comment>
<comment type="subunit">
    <molecule>Envelope glycoprotein E2</molecule>
    <text evidence="4 9">Forms a heterodimer with envelope glycoprotein E1 (By similarity). Interacts with host CD81 and SCARB1 receptors; these interactions play a role in viral entry into host cell (By similarity). Interacts with host EIF2AK2/PKR; this interaction inhibits EIF2AK2 and probably allows the virus to evade the innate immune response (By similarity). Interacts with host CD209/DC-SIGN and CLEC4M/DC-SIGNR (By similarity). Interact with host SPCS1; this interaction is essential for viral particle assembly (By similarity). Interacts with protease NS2 (By similarity). The heterodimer E1/E2 interacts with host CLDN1; this interaction plays a role in viral entry into host cell (By similarity). Part of the viral assembly initiation complex composed of NS2, E1, E2, NS3, NS4A, NS5A and the mature core protein (By similarity).</text>
</comment>
<comment type="subcellular location">
    <molecule>Core protein precursor</molecule>
    <subcellularLocation>
        <location evidence="3">Host endoplasmic reticulum membrane</location>
        <topology evidence="11">Single-pass membrane protein</topology>
    </subcellularLocation>
    <subcellularLocation>
        <location evidence="3">Host mitochondrion membrane</location>
        <topology evidence="11">Single-pass type I membrane protein</topology>
    </subcellularLocation>
    <text>The C-terminal transmembrane domain of the core protein precursor contains an ER signal leading the nascent polyprotein to the ER membrane.</text>
</comment>
<comment type="subcellular location">
    <molecule>Mature core protein</molecule>
    <subcellularLocation>
        <location evidence="9">Virion</location>
    </subcellularLocation>
    <subcellularLocation>
        <location evidence="9">Host cytoplasm</location>
    </subcellularLocation>
    <subcellularLocation>
        <location evidence="13">Host nucleus</location>
    </subcellularLocation>
    <subcellularLocation>
        <location evidence="9">Host lipid droplet</location>
    </subcellularLocation>
    <text evidence="4">Only a minor proportion of core protein is present in the nucleus (By similarity). Probably present on the surface of lipid droplets (By similarity).</text>
</comment>
<comment type="subcellular location">
    <molecule>Envelope glycoprotein E1</molecule>
    <subcellularLocation>
        <location evidence="14">Virion membrane</location>
        <topology evidence="14">Single-pass type I membrane protein</topology>
    </subcellularLocation>
    <subcellularLocation>
        <location>Host endoplasmic reticulum membrane</location>
        <topology evidence="4">Single-pass type I membrane protein</topology>
    </subcellularLocation>
    <text evidence="4">The C-terminal transmembrane domain acts as a signal sequence and forms a hairpin structure before cleavage by host signal peptidase (By similarity). After cleavage, the membrane sequence is retained at the C-terminus of the protein, serving as ER membrane anchor (By similarity). A reorientation of the second hydrophobic stretch occurs after cleavage producing a single reoriented transmembrane domain (By similarity). These events explain the final topology of the protein (By similarity).</text>
</comment>
<comment type="subcellular location">
    <molecule>Envelope glycoprotein E2</molecule>
    <subcellularLocation>
        <location evidence="14">Virion membrane</location>
        <topology evidence="14">Single-pass type I membrane protein</topology>
    </subcellularLocation>
    <subcellularLocation>
        <location>Host endoplasmic reticulum membrane</location>
        <topology evidence="4">Single-pass type I membrane protein</topology>
    </subcellularLocation>
    <subcellularLocation>
        <location evidence="10">Host lipid droplet</location>
    </subcellularLocation>
    <text evidence="4">The C-terminal transmembrane domain acts as a signal sequence and forms a hairpin structure before cleavage by host signal peptidase (By similarity). After cleavage, the membrane sequence is retained at the C-terminus of the protein, serving as ER membrane anchor (By similarity). A reorientation of the second hydrophobic stretch occurs after cleavage producing a single reoriented transmembrane domain (By similarity). These events explain the final topology of the protein (By similarity).</text>
</comment>
<comment type="domain">
    <molecule>Envelope glycoprotein E1</molecule>
    <text evidence="4">The transmembrane regions of envelope E1 and E2 glycoproteins are involved in heterodimer formation, ER localization, and assembly of these proteins.</text>
</comment>
<comment type="domain">
    <molecule>Envelope glycoprotein E2</molecule>
    <text evidence="2 4">The transmembrane regions of envelope E1 and E2 glycoproteins are involved in heterodimer formation, ER localization, and assembly of these proteins (By similarity). Envelope E2 glycoprotein contain two highly variable regions called hypervariable region 1 and 2 (HVR1 and HVR2) (By similarity). E2 also contain two segments involved in CD81-binding (By similarity). HVR1 is implicated in the SCARB1-mediated cell entry and probably acts as a regulator of the association of particles with lipids (By similarity).</text>
</comment>
<comment type="PTM">
    <molecule>Genome polyprotein</molecule>
    <text evidence="3 4">Specific enzymatic cleavages in vivo yield mature proteins (By similarity). The structural proteins, core, E1, E2 and p7 are produced by proteolytic processing by host signal peptidases (By similarity). The core protein precursor is synthesized as a 23 kDa, which is retained in the ER membrane through the hydrophobic signal peptide (By similarity). Cleavage by the signal peptidase releases the 21 kDa mature core protein (By similarity). The cleavage of the core protein precursor occurs between aminoacids 176 and 188 but the exact cleavage site is not known (By similarity). Some degraded forms of the core protein appear as well during the course of infection (By similarity). The other proteins (p7, NS2, NS3, NS4A, NS4B, NS5A and NS5B) are cleaved by the viral proteases (By similarity). Autoprocessing between NS2 and NS3 is mediated by the NS2 cysteine protease catalytic domain and regulated by the NS3 N-terminal domain (By similarity).</text>
</comment>
<comment type="PTM">
    <molecule>Mature core protein</molecule>
    <text evidence="13">Phosphorylated by host PKC and PKA.</text>
</comment>
<comment type="PTM">
    <molecule>Mature core protein</molecule>
    <text evidence="6">Ubiquitinated; mediated by UBE3A and leading to core protein subsequent proteasomal degradation.</text>
</comment>
<comment type="PTM">
    <molecule>Envelope glycoprotein E1</molecule>
    <text evidence="4">Highly N-glycosylated.</text>
</comment>
<comment type="PTM">
    <molecule>Envelope glycoprotein E2</molecule>
    <text evidence="4">Highly N-glycosylated.</text>
</comment>
<comment type="miscellaneous">
    <text evidence="14">Viral particle assembly takes place at the surface of ER-derived membranes in close proximity to lipid droplets. NS2 associates with E1/E2 glycoproteins, NS3 and NS5A, which interacts with the viral RNA and core protein to promote genome encapsidation. The nucleocapsid buds at the ER membrane where E1/E2 glycoproteins are anchored and afterward associate with nascent lipid droplet to acquire APOE and APOC. Secretion of viral particles is probably regulated by viroporin p7.</text>
</comment>
<comment type="miscellaneous">
    <molecule>Mature core protein</molecule>
    <text evidence="1">Exerts viral interference on hepatitis B virus when HCV and HBV coinfect the same cell, by suppressing HBV gene expression, RNA encapsidation and budding.</text>
</comment>
<comment type="similarity">
    <text evidence="14">Belongs to the hepacivirus polyprotein family.</text>
</comment>
<comment type="caution">
    <text evidence="14">The core gene probably also codes for alternative reading frame proteins (ARFPs). Many functions depicted for the core protein might belong to the ARFPs.</text>
</comment>
<reference key="1">
    <citation type="journal article" date="1992" name="J. Gen. Virol.">
        <title>Genomic characterization and mutation rate of hepatitis C virus isolated from a patient who contracted hepatitis during an epidemic of non-A, non-B hepatitis in Japan.</title>
        <authorList>
            <person name="Abe K."/>
            <person name="Inchauspe G."/>
            <person name="Fujisawa K."/>
        </authorList>
    </citation>
    <scope>NUCLEOTIDE SEQUENCE [GENOMIC RNA]</scope>
</reference>
<reference key="2">
    <citation type="journal article" date="1995" name="J. Virol.">
        <title>Modulation of the trans-suppression activity of hepatitis C virus core protein by phosphorylation.</title>
        <authorList>
            <person name="Shih C.-M."/>
            <person name="Chen C.-M."/>
            <person name="Chen S.-Y."/>
            <person name="Lee Y.-H.W."/>
        </authorList>
    </citation>
    <scope>PHOSPHORYLATION AT SER-53; SER-99 AND SER-116</scope>
    <scope>MUTAGENESIS OF SER-53; SER-99 AND SER-116</scope>
    <scope>SUBCELLULAR LOCATION (MATURE CORE PROTEIN)</scope>
</reference>
<reference key="3">
    <citation type="journal article" date="2000" name="J. Viral Hepat.">
        <title>Properties of the hepatitis C virus core protein: a structural protein that modulates cellular processes.</title>
        <authorList>
            <person name="McLauchlan J."/>
        </authorList>
    </citation>
    <scope>REVIEW</scope>
</reference>
<reference key="4">
    <citation type="journal article" date="2004" name="Hepatology">
        <title>Structural biology of hepatitis C virus.</title>
        <authorList>
            <person name="Penin F."/>
            <person name="Dubuisson J."/>
            <person name="Rey F.A."/>
            <person name="Moradpour D."/>
            <person name="Pawlotsky J.-M."/>
        </authorList>
    </citation>
    <scope>REVIEW</scope>
</reference>